<organism>
    <name type="scientific">Mesocricetus auratus</name>
    <name type="common">Golden hamster</name>
    <dbReference type="NCBI Taxonomy" id="10036"/>
    <lineage>
        <taxon>Eukaryota</taxon>
        <taxon>Metazoa</taxon>
        <taxon>Chordata</taxon>
        <taxon>Craniata</taxon>
        <taxon>Vertebrata</taxon>
        <taxon>Euteleostomi</taxon>
        <taxon>Mammalia</taxon>
        <taxon>Eutheria</taxon>
        <taxon>Euarchontoglires</taxon>
        <taxon>Glires</taxon>
        <taxon>Rodentia</taxon>
        <taxon>Myomorpha</taxon>
        <taxon>Muroidea</taxon>
        <taxon>Cricetidae</taxon>
        <taxon>Cricetinae</taxon>
        <taxon>Mesocricetus</taxon>
    </lineage>
</organism>
<name>CP2DS_MESAU</name>
<keyword id="KW-0256">Endoplasmic reticulum</keyword>
<keyword id="KW-0349">Heme</keyword>
<keyword id="KW-0408">Iron</keyword>
<keyword id="KW-0472">Membrane</keyword>
<keyword id="KW-0479">Metal-binding</keyword>
<keyword id="KW-0492">Microsome</keyword>
<keyword id="KW-0503">Monooxygenase</keyword>
<keyword id="KW-0560">Oxidoreductase</keyword>
<keyword id="KW-1185">Reference proteome</keyword>
<evidence type="ECO:0000250" key="1"/>
<evidence type="ECO:0000305" key="2"/>
<comment type="cofactor">
    <cofactor evidence="1">
        <name>heme</name>
        <dbReference type="ChEBI" id="CHEBI:30413"/>
    </cofactor>
</comment>
<comment type="subcellular location">
    <subcellularLocation>
        <location evidence="1">Endoplasmic reticulum membrane</location>
        <topology evidence="1">Peripheral membrane protein</topology>
    </subcellularLocation>
    <subcellularLocation>
        <location evidence="1">Microsome membrane</location>
        <topology evidence="1">Peripheral membrane protein</topology>
    </subcellularLocation>
</comment>
<comment type="similarity">
    <text evidence="2">Belongs to the cytochrome P450 family.</text>
</comment>
<protein>
    <recommendedName>
        <fullName>Cytochrome P450 2D28</fullName>
        <ecNumber>1.14.14.-</ecNumber>
    </recommendedName>
    <alternativeName>
        <fullName>CYPIID28</fullName>
    </alternativeName>
</protein>
<feature type="chain" id="PRO_0000051749" description="Cytochrome P450 2D28">
    <location>
        <begin position="1"/>
        <end position="500"/>
    </location>
</feature>
<feature type="binding site" description="axial binding residue" evidence="1">
    <location>
        <position position="446"/>
    </location>
    <ligand>
        <name>heme</name>
        <dbReference type="ChEBI" id="CHEBI:30413"/>
    </ligand>
    <ligandPart>
        <name>Fe</name>
        <dbReference type="ChEBI" id="CHEBI:18248"/>
    </ligandPart>
</feature>
<accession>Q9QUJ1</accession>
<gene>
    <name type="primary">CYP2D28A</name>
</gene>
<gene>
    <name type="primary">CYP2D28B</name>
</gene>
<proteinExistence type="evidence at transcript level"/>
<reference key="1">
    <citation type="journal article" date="2000" name="Comp. Biochem. Physiol.">
        <title>Molecular cloning and characterization of three novel cytochrome P450 2D isoforms, CYP2D20, CYP2D27, and CYP2D28 in the Syrian hamster (Mesocricetus auratus).</title>
        <authorList>
            <person name="Oka T."/>
            <person name="Fukuhara M."/>
            <person name="Ushio F."/>
            <person name="Kurose K."/>
        </authorList>
    </citation>
    <scope>NUCLEOTIDE SEQUENCE [MRNA]</scope>
    <source>
        <tissue>Liver</tissue>
    </source>
</reference>
<dbReference type="EC" id="1.14.14.-"/>
<dbReference type="EMBL" id="AB031865">
    <property type="protein sequence ID" value="BAA89314.1"/>
    <property type="molecule type" value="mRNA"/>
</dbReference>
<dbReference type="EMBL" id="AB031866">
    <property type="protein sequence ID" value="BAA89315.1"/>
    <property type="molecule type" value="mRNA"/>
</dbReference>
<dbReference type="RefSeq" id="NP_001297489.1">
    <property type="nucleotide sequence ID" value="NM_001310560.1"/>
</dbReference>
<dbReference type="SMR" id="Q9QUJ1"/>
<dbReference type="GeneID" id="101840984"/>
<dbReference type="KEGG" id="maua:101840984"/>
<dbReference type="eggNOG" id="KOG0156">
    <property type="taxonomic scope" value="Eukaryota"/>
</dbReference>
<dbReference type="OrthoDB" id="3934656at2759"/>
<dbReference type="Proteomes" id="UP000189706">
    <property type="component" value="Unplaced"/>
</dbReference>
<dbReference type="GO" id="GO:0005789">
    <property type="term" value="C:endoplasmic reticulum membrane"/>
    <property type="evidence" value="ECO:0007669"/>
    <property type="project" value="UniProtKB-SubCell"/>
</dbReference>
<dbReference type="GO" id="GO:0020037">
    <property type="term" value="F:heme binding"/>
    <property type="evidence" value="ECO:0007669"/>
    <property type="project" value="InterPro"/>
</dbReference>
<dbReference type="GO" id="GO:0005506">
    <property type="term" value="F:iron ion binding"/>
    <property type="evidence" value="ECO:0007669"/>
    <property type="project" value="InterPro"/>
</dbReference>
<dbReference type="GO" id="GO:0016712">
    <property type="term" value="F:oxidoreductase activity, acting on paired donors, with incorporation or reduction of molecular oxygen, reduced flavin or flavoprotein as one donor, and incorporation of one atom of oxygen"/>
    <property type="evidence" value="ECO:0007669"/>
    <property type="project" value="InterPro"/>
</dbReference>
<dbReference type="GO" id="GO:0019369">
    <property type="term" value="P:arachidonate metabolic process"/>
    <property type="evidence" value="ECO:0007669"/>
    <property type="project" value="TreeGrafter"/>
</dbReference>
<dbReference type="GO" id="GO:0006805">
    <property type="term" value="P:xenobiotic metabolic process"/>
    <property type="evidence" value="ECO:0007669"/>
    <property type="project" value="TreeGrafter"/>
</dbReference>
<dbReference type="CDD" id="cd20663">
    <property type="entry name" value="CYP2D"/>
    <property type="match status" value="1"/>
</dbReference>
<dbReference type="FunFam" id="1.10.630.10:FF:000004">
    <property type="entry name" value="cytochrome P450 2D15 isoform X1"/>
    <property type="match status" value="1"/>
</dbReference>
<dbReference type="Gene3D" id="1.10.630.10">
    <property type="entry name" value="Cytochrome P450"/>
    <property type="match status" value="1"/>
</dbReference>
<dbReference type="InterPro" id="IPR001128">
    <property type="entry name" value="Cyt_P450"/>
</dbReference>
<dbReference type="InterPro" id="IPR017972">
    <property type="entry name" value="Cyt_P450_CS"/>
</dbReference>
<dbReference type="InterPro" id="IPR002401">
    <property type="entry name" value="Cyt_P450_E_grp-I"/>
</dbReference>
<dbReference type="InterPro" id="IPR008069">
    <property type="entry name" value="Cyt_P450_E_grp-I_CYP2D-like"/>
</dbReference>
<dbReference type="InterPro" id="IPR036396">
    <property type="entry name" value="Cyt_P450_sf"/>
</dbReference>
<dbReference type="InterPro" id="IPR050182">
    <property type="entry name" value="Cytochrome_P450_fam2"/>
</dbReference>
<dbReference type="PANTHER" id="PTHR24300">
    <property type="entry name" value="CYTOCHROME P450 508A4-RELATED"/>
    <property type="match status" value="1"/>
</dbReference>
<dbReference type="PANTHER" id="PTHR24300:SF119">
    <property type="entry name" value="CYTOCHROME P450-RELATED"/>
    <property type="match status" value="1"/>
</dbReference>
<dbReference type="Pfam" id="PF00067">
    <property type="entry name" value="p450"/>
    <property type="match status" value="1"/>
</dbReference>
<dbReference type="PRINTS" id="PR00463">
    <property type="entry name" value="EP450I"/>
</dbReference>
<dbReference type="PRINTS" id="PR01686">
    <property type="entry name" value="EP450ICYP2D"/>
</dbReference>
<dbReference type="PRINTS" id="PR00385">
    <property type="entry name" value="P450"/>
</dbReference>
<dbReference type="SUPFAM" id="SSF48264">
    <property type="entry name" value="Cytochrome P450"/>
    <property type="match status" value="1"/>
</dbReference>
<dbReference type="PROSITE" id="PS00086">
    <property type="entry name" value="CYTOCHROME_P450"/>
    <property type="match status" value="1"/>
</dbReference>
<sequence>MELLTGHGLWPVAMFTVILILLVDLLHRRQRWASRYPPGPVPLPLLGNLLQVDLKNMQYSVHKLQQHYGDVFSLQMAWKHMVMINGLKAVREVLVNYGEYTADRPKIPIYEHGSLGPKARGVILAPYGPEWREQRRFSVSTLRNLGLGKKSLEQWVTDEAGHLCDAFKDQAGRPFNPSTLLNKAVCNVITSLIFARRFEYEDANLIRMLRLLEEALTNISGFIPEILNTFPVLLHIPGLFDKVFSGQKTFAAIVDNLLTENRRTWDPEQPPRGLTDAFLAEMEKAKGNPESSFNDQNLRMVVNDLFIAGTVSTSTTLSWALLFMIQYPDVQRRVQQEIDDILGPGRSPEMADQARMPYTNAVIHEVQRFADIAPLNLPCITSRDIEVQGFLIPKGTTLITNLSSVLKDETVWEKPLHFHPEHFLDAQGCFVKQEAFMPFSAGRRACLGEPLARMELFLFFTCLLQRFSFSVPAGQPRPSDHVVLGVLKSPAPYQLCAVPR</sequence>